<sequence length="227" mass="24667">MTARPLNELVEPGWARALQPVAEQVARMGQFLRAEIAAGRRYLPAGPNVLRAFTYPFDEVKVLIVGQDPYPTPGHAVGLSFSVAPDVSPLPRSLANIFQEYTADLGHPPPSCGDLTPWAQRGVLLLNRVLTVRPSNPASHRGKGWEPVTECAIRALTARQQPLVAILWGRDASTLKPILAQGNCVAIESPHPSPLSASRGFFGSRPFSRANKLLAEMGADEIDWRLP</sequence>
<dbReference type="EC" id="3.2.2.27" evidence="1"/>
<dbReference type="EMBL" id="AE016958">
    <property type="protein sequence ID" value="AAS05564.1"/>
    <property type="molecule type" value="Genomic_DNA"/>
</dbReference>
<dbReference type="RefSeq" id="WP_003875027.1">
    <property type="nucleotide sequence ID" value="NZ_CP106873.1"/>
</dbReference>
<dbReference type="SMR" id="Q73VJ7"/>
<dbReference type="STRING" id="262316.MAP_3016c"/>
<dbReference type="KEGG" id="mpa:MAP_3016c"/>
<dbReference type="PATRIC" id="fig|262316.17.peg.3196"/>
<dbReference type="eggNOG" id="COG0692">
    <property type="taxonomic scope" value="Bacteria"/>
</dbReference>
<dbReference type="HOGENOM" id="CLU_032162_3_1_11"/>
<dbReference type="Proteomes" id="UP000000580">
    <property type="component" value="Chromosome"/>
</dbReference>
<dbReference type="GO" id="GO:0005737">
    <property type="term" value="C:cytoplasm"/>
    <property type="evidence" value="ECO:0007669"/>
    <property type="project" value="UniProtKB-SubCell"/>
</dbReference>
<dbReference type="GO" id="GO:0004844">
    <property type="term" value="F:uracil DNA N-glycosylase activity"/>
    <property type="evidence" value="ECO:0007669"/>
    <property type="project" value="UniProtKB-UniRule"/>
</dbReference>
<dbReference type="GO" id="GO:0097510">
    <property type="term" value="P:base-excision repair, AP site formation via deaminated base removal"/>
    <property type="evidence" value="ECO:0007669"/>
    <property type="project" value="TreeGrafter"/>
</dbReference>
<dbReference type="CDD" id="cd10027">
    <property type="entry name" value="UDG-F1-like"/>
    <property type="match status" value="1"/>
</dbReference>
<dbReference type="FunFam" id="3.40.470.10:FF:000006">
    <property type="entry name" value="Uracil-DNA glycosylase"/>
    <property type="match status" value="1"/>
</dbReference>
<dbReference type="Gene3D" id="3.40.470.10">
    <property type="entry name" value="Uracil-DNA glycosylase-like domain"/>
    <property type="match status" value="1"/>
</dbReference>
<dbReference type="HAMAP" id="MF_00148">
    <property type="entry name" value="UDG"/>
    <property type="match status" value="1"/>
</dbReference>
<dbReference type="InterPro" id="IPR002043">
    <property type="entry name" value="UDG_fam1"/>
</dbReference>
<dbReference type="InterPro" id="IPR018085">
    <property type="entry name" value="Ura-DNA_Glyclase_AS"/>
</dbReference>
<dbReference type="InterPro" id="IPR005122">
    <property type="entry name" value="Uracil-DNA_glycosylase-like"/>
</dbReference>
<dbReference type="InterPro" id="IPR036895">
    <property type="entry name" value="Uracil-DNA_glycosylase-like_sf"/>
</dbReference>
<dbReference type="NCBIfam" id="NF003588">
    <property type="entry name" value="PRK05254.1-1"/>
    <property type="match status" value="1"/>
</dbReference>
<dbReference type="NCBIfam" id="NF003592">
    <property type="entry name" value="PRK05254.1-5"/>
    <property type="match status" value="1"/>
</dbReference>
<dbReference type="NCBIfam" id="TIGR00628">
    <property type="entry name" value="ung"/>
    <property type="match status" value="1"/>
</dbReference>
<dbReference type="PANTHER" id="PTHR11264">
    <property type="entry name" value="URACIL-DNA GLYCOSYLASE"/>
    <property type="match status" value="1"/>
</dbReference>
<dbReference type="PANTHER" id="PTHR11264:SF0">
    <property type="entry name" value="URACIL-DNA GLYCOSYLASE"/>
    <property type="match status" value="1"/>
</dbReference>
<dbReference type="Pfam" id="PF03167">
    <property type="entry name" value="UDG"/>
    <property type="match status" value="1"/>
</dbReference>
<dbReference type="SMART" id="SM00986">
    <property type="entry name" value="UDG"/>
    <property type="match status" value="1"/>
</dbReference>
<dbReference type="SMART" id="SM00987">
    <property type="entry name" value="UreE_C"/>
    <property type="match status" value="1"/>
</dbReference>
<dbReference type="SUPFAM" id="SSF52141">
    <property type="entry name" value="Uracil-DNA glycosylase-like"/>
    <property type="match status" value="1"/>
</dbReference>
<dbReference type="PROSITE" id="PS00130">
    <property type="entry name" value="U_DNA_GLYCOSYLASE"/>
    <property type="match status" value="1"/>
</dbReference>
<reference key="1">
    <citation type="journal article" date="2005" name="Proc. Natl. Acad. Sci. U.S.A.">
        <title>The complete genome sequence of Mycobacterium avium subspecies paratuberculosis.</title>
        <authorList>
            <person name="Li L."/>
            <person name="Bannantine J.P."/>
            <person name="Zhang Q."/>
            <person name="Amonsin A."/>
            <person name="May B.J."/>
            <person name="Alt D."/>
            <person name="Banerji N."/>
            <person name="Kanjilal S."/>
            <person name="Kapur V."/>
        </authorList>
    </citation>
    <scope>NUCLEOTIDE SEQUENCE [LARGE SCALE GENOMIC DNA]</scope>
    <source>
        <strain>ATCC BAA-968 / K-10</strain>
    </source>
</reference>
<protein>
    <recommendedName>
        <fullName evidence="1">Uracil-DNA glycosylase</fullName>
        <shortName evidence="1">UDG</shortName>
        <ecNumber evidence="1">3.2.2.27</ecNumber>
    </recommendedName>
</protein>
<feature type="chain" id="PRO_1000009912" description="Uracil-DNA glycosylase">
    <location>
        <begin position="1"/>
        <end position="227"/>
    </location>
</feature>
<feature type="active site" description="Proton acceptor" evidence="1">
    <location>
        <position position="68"/>
    </location>
</feature>
<comment type="function">
    <text evidence="1">Excises uracil residues from the DNA which can arise as a result of misincorporation of dUMP residues by DNA polymerase or due to deamination of cytosine.</text>
</comment>
<comment type="catalytic activity">
    <reaction evidence="1">
        <text>Hydrolyzes single-stranded DNA or mismatched double-stranded DNA and polynucleotides, releasing free uracil.</text>
        <dbReference type="EC" id="3.2.2.27"/>
    </reaction>
</comment>
<comment type="subcellular location">
    <subcellularLocation>
        <location evidence="1">Cytoplasm</location>
    </subcellularLocation>
</comment>
<comment type="similarity">
    <text evidence="1">Belongs to the uracil-DNA glycosylase (UDG) superfamily. UNG family.</text>
</comment>
<gene>
    <name evidence="1" type="primary">ung</name>
    <name type="ordered locus">MAP_3016c</name>
</gene>
<name>UNG_MYCPA</name>
<keyword id="KW-0963">Cytoplasm</keyword>
<keyword id="KW-0227">DNA damage</keyword>
<keyword id="KW-0234">DNA repair</keyword>
<keyword id="KW-0378">Hydrolase</keyword>
<keyword id="KW-1185">Reference proteome</keyword>
<proteinExistence type="inferred from homology"/>
<organism>
    <name type="scientific">Mycolicibacterium paratuberculosis (strain ATCC BAA-968 / K-10)</name>
    <name type="common">Mycobacterium paratuberculosis</name>
    <dbReference type="NCBI Taxonomy" id="262316"/>
    <lineage>
        <taxon>Bacteria</taxon>
        <taxon>Bacillati</taxon>
        <taxon>Actinomycetota</taxon>
        <taxon>Actinomycetes</taxon>
        <taxon>Mycobacteriales</taxon>
        <taxon>Mycobacteriaceae</taxon>
        <taxon>Mycobacterium</taxon>
        <taxon>Mycobacterium avium complex (MAC)</taxon>
    </lineage>
</organism>
<accession>Q73VJ7</accession>
<evidence type="ECO:0000255" key="1">
    <source>
        <dbReference type="HAMAP-Rule" id="MF_00148"/>
    </source>
</evidence>